<dbReference type="EMBL" id="CP000282">
    <property type="protein sequence ID" value="ABD80601.1"/>
    <property type="molecule type" value="Genomic_DNA"/>
</dbReference>
<dbReference type="SMR" id="Q21L28"/>
<dbReference type="STRING" id="203122.Sde_1339"/>
<dbReference type="KEGG" id="sde:Sde_1339"/>
<dbReference type="eggNOG" id="COG3100">
    <property type="taxonomic scope" value="Bacteria"/>
</dbReference>
<dbReference type="HOGENOM" id="CLU_155118_2_0_6"/>
<dbReference type="Proteomes" id="UP000001947">
    <property type="component" value="Chromosome"/>
</dbReference>
<dbReference type="Gene3D" id="3.10.510.20">
    <property type="entry name" value="YcgL domain"/>
    <property type="match status" value="1"/>
</dbReference>
<dbReference type="HAMAP" id="MF_01866">
    <property type="entry name" value="UPF0745"/>
    <property type="match status" value="1"/>
</dbReference>
<dbReference type="InterPro" id="IPR038068">
    <property type="entry name" value="YcgL-like_sf"/>
</dbReference>
<dbReference type="InterPro" id="IPR027354">
    <property type="entry name" value="YcgL_dom"/>
</dbReference>
<dbReference type="PANTHER" id="PTHR38109">
    <property type="entry name" value="PROTEIN YCGL"/>
    <property type="match status" value="1"/>
</dbReference>
<dbReference type="PANTHER" id="PTHR38109:SF1">
    <property type="entry name" value="PROTEIN YCGL"/>
    <property type="match status" value="1"/>
</dbReference>
<dbReference type="Pfam" id="PF05166">
    <property type="entry name" value="YcgL"/>
    <property type="match status" value="1"/>
</dbReference>
<dbReference type="SUPFAM" id="SSF160191">
    <property type="entry name" value="YcgL-like"/>
    <property type="match status" value="1"/>
</dbReference>
<dbReference type="PROSITE" id="PS51648">
    <property type="entry name" value="YCGL"/>
    <property type="match status" value="1"/>
</dbReference>
<gene>
    <name type="ordered locus">Sde_1339</name>
</gene>
<organism>
    <name type="scientific">Saccharophagus degradans (strain 2-40 / ATCC 43961 / DSM 17024)</name>
    <dbReference type="NCBI Taxonomy" id="203122"/>
    <lineage>
        <taxon>Bacteria</taxon>
        <taxon>Pseudomonadati</taxon>
        <taxon>Pseudomonadota</taxon>
        <taxon>Gammaproteobacteria</taxon>
        <taxon>Cellvibrionales</taxon>
        <taxon>Cellvibrionaceae</taxon>
        <taxon>Saccharophagus</taxon>
    </lineage>
</organism>
<sequence length="91" mass="10553">MIVDIYRSAKKEGMYLYVPRNKALDELPEPLMKQFGRADHSMVLVLTPEKKLARASVEKVIESIENQGFYLQMPPPPESYMNEIPNDKMPR</sequence>
<keyword id="KW-1185">Reference proteome</keyword>
<name>Y1339_SACD2</name>
<evidence type="ECO:0000255" key="1">
    <source>
        <dbReference type="HAMAP-Rule" id="MF_01866"/>
    </source>
</evidence>
<evidence type="ECO:0000256" key="2">
    <source>
        <dbReference type="SAM" id="MobiDB-lite"/>
    </source>
</evidence>
<accession>Q21L28</accession>
<reference key="1">
    <citation type="journal article" date="2008" name="PLoS Genet.">
        <title>Complete genome sequence of the complex carbohydrate-degrading marine bacterium, Saccharophagus degradans strain 2-40 T.</title>
        <authorList>
            <person name="Weiner R.M."/>
            <person name="Taylor L.E. II"/>
            <person name="Henrissat B."/>
            <person name="Hauser L."/>
            <person name="Land M."/>
            <person name="Coutinho P.M."/>
            <person name="Rancurel C."/>
            <person name="Saunders E.H."/>
            <person name="Longmire A.G."/>
            <person name="Zhang H."/>
            <person name="Bayer E.A."/>
            <person name="Gilbert H.J."/>
            <person name="Larimer F."/>
            <person name="Zhulin I.B."/>
            <person name="Ekborg N.A."/>
            <person name="Lamed R."/>
            <person name="Richardson P.M."/>
            <person name="Borovok I."/>
            <person name="Hutcheson S."/>
        </authorList>
    </citation>
    <scope>NUCLEOTIDE SEQUENCE [LARGE SCALE GENOMIC DNA]</scope>
    <source>
        <strain>2-40 / ATCC 43961 / DSM 17024</strain>
    </source>
</reference>
<proteinExistence type="inferred from homology"/>
<feature type="chain" id="PRO_0000375347" description="YcgL domain-containing protein Sde_1339">
    <location>
        <begin position="1"/>
        <end position="91"/>
    </location>
</feature>
<feature type="domain" description="YcgL" evidence="1">
    <location>
        <begin position="1"/>
        <end position="85"/>
    </location>
</feature>
<feature type="region of interest" description="Disordered" evidence="2">
    <location>
        <begin position="72"/>
        <end position="91"/>
    </location>
</feature>
<protein>
    <recommendedName>
        <fullName evidence="1">YcgL domain-containing protein Sde_1339</fullName>
    </recommendedName>
</protein>